<comment type="function">
    <text evidence="5 6 7 9 10 11">Essential for hedgehog signaling regulation: acts both as a negative and a positive regulator of sonic hedgehog (Shh) and Indian hedgehog (Ihh) pathways, acting downstream of SMO, through both SUFU-dependent and -independent mechanisms. Involved in the regulation of microtubular dynamics. Required for proper organization of the ciliary tip and control of ciliary localization of SUFU-GLI2 complexes. Required for localization of GLI3 to cilia in response to Shh. Negatively regulates Shh signaling by preventing inappropriate activation of the transcriptional activator GLI2 in the absence of ligand. Positively regulates Shh signaling by preventing the processing of the transcription factor GLI3 into its repressor form. In keratinocytes, promotes the dissociation of SUFU-GLI2 complexes, GLI2 nuclear translocation and Shh signaling activation. Involved in the regulation of epidermal differentiation and chondrocyte development.</text>
</comment>
<comment type="subunit">
    <text evidence="1 5 11 12">Can form homodimers and interacts with microtubules (PubMed:24952464). Interacts with GLI1 and SMO (By similarity). Interacts with GLI2, GLI3 and SUFU (PubMed:19549984). Interacts with NPHP1 (By similarity). Interacts with SMO and DLG5 (via PDZ4 or guanylate kinase-like domain) (PubMed:25644602).</text>
</comment>
<comment type="interaction">
    <interactant intactId="EBI-16110388">
        <id>B7ZNG0-2</id>
    </interactant>
    <interactant intactId="EBI-16110388">
        <id>B7ZNG0-2</id>
        <label>Kif7</label>
    </interactant>
    <organismsDiffer>false</organismsDiffer>
    <experiments>2</experiments>
</comment>
<comment type="subcellular location">
    <subcellularLocation>
        <location evidence="7 11 12">Cell projection</location>
        <location evidence="7 11 12">Cilium</location>
    </subcellularLocation>
    <subcellularLocation>
        <location evidence="12">Cytoplasm</location>
        <location evidence="12">Cytoskeleton</location>
        <location evidence="12">Cilium basal body</location>
    </subcellularLocation>
    <text>Localizes to the cilium tip.</text>
</comment>
<comment type="alternative products">
    <event type="alternative splicing"/>
    <isoform>
        <id>B7ZNG0-1</id>
        <name>1</name>
        <sequence type="displayed"/>
    </isoform>
    <isoform>
        <id>B7ZNG0-2</id>
        <name>2</name>
        <sequence type="described" ref="VSP_040736"/>
    </isoform>
</comment>
<comment type="tissue specificity">
    <text evidence="8">Expressed in heart, lung, liver, kidney, testis, spleen and cerebellum.</text>
</comment>
<comment type="PTM">
    <text evidence="13">Polyubiquitinated by UBR3.</text>
</comment>
<comment type="disruption phenotype">
    <text evidence="5 6 7">Mutations appear to be the cause of the matariki (maki) phenotype, characterized by expanded motor neuron domain in the 10.5 dpc neural tube. Motor neurons are increased in number and expand dorsally. Mutants die at the end of gestation, when other phenotypes characteristic of elevated Shh signaling are apparent, including preaxial polydactyly. Knockout mice have defects in developmental patterning and die at birth with severe malformations, including exencephaly and polydactyly.</text>
</comment>
<comment type="similarity">
    <text evidence="3">Belongs to the TRAFAC class myosin-kinesin ATPase superfamily. Kinesin family.</text>
</comment>
<accession>B7ZNG0</accession>
<accession>B2RUB1</accession>
<reference key="1">
    <citation type="journal article" date="2004" name="Genome Res.">
        <title>The status, quality, and expansion of the NIH full-length cDNA project: the Mammalian Gene Collection (MGC).</title>
        <authorList>
            <consortium name="The MGC Project Team"/>
        </authorList>
    </citation>
    <scope>NUCLEOTIDE SEQUENCE [LARGE SCALE MRNA] (ISOFORMS 1 AND 2)</scope>
    <source>
        <tissue>Brain</tissue>
    </source>
</reference>
<reference key="2">
    <citation type="journal article" date="2009" name="Curr. Biol.">
        <title>The mammalian Cos2 homolog Kif7 plays an essential role in modulating Hh signal transduction during development.</title>
        <authorList>
            <person name="Endoh-Yamagami S."/>
            <person name="Evangelista M."/>
            <person name="Wilson D."/>
            <person name="Wen X."/>
            <person name="Theunissen J.W."/>
            <person name="Phamluong K."/>
            <person name="Davis M."/>
            <person name="Scales S.J."/>
            <person name="Solloway M.J."/>
            <person name="de Sauvage F.J."/>
            <person name="Peterson A.S."/>
        </authorList>
    </citation>
    <scope>FUNCTION</scope>
    <scope>DISRUPTION PHENOTYPE</scope>
</reference>
<reference key="3">
    <citation type="journal article" date="2009" name="Proc. Natl. Acad. Sci. U.S.A.">
        <title>Mouse Kif7/Costal2 is a cilia-associated protein that regulates Sonic hedgehog signaling.</title>
        <authorList>
            <person name="Liem K.F. Jr."/>
            <person name="He M."/>
            <person name="Ocbina P.J."/>
            <person name="Anderson K.V."/>
        </authorList>
    </citation>
    <scope>FUNCTION</scope>
    <scope>SUBCELLULAR LOCATION</scope>
    <scope>DISRUPTION PHENOTYPE</scope>
    <scope>MUTAGENESIS OF LEU-130</scope>
</reference>
<reference key="4">
    <citation type="journal article" date="2009" name="Sci. Signal.">
        <title>The kinesin protein Kif7 is a critical regulator of Gli transcription factors in mammalian hedgehog signaling.</title>
        <authorList>
            <person name="Cheung H.O."/>
            <person name="Zhang X."/>
            <person name="Ribeiro A."/>
            <person name="Mo R."/>
            <person name="Makino S."/>
            <person name="Puviindran V."/>
            <person name="Law K.K."/>
            <person name="Briscoe J."/>
            <person name="Hui C.C."/>
        </authorList>
    </citation>
    <scope>FUNCTION</scope>
    <scope>DISRUPTION PHENOTYPE</scope>
    <scope>INTERACTION WITH GLI2 AND GLI3</scope>
</reference>
<reference key="5">
    <citation type="journal article" date="2010" name="Cell">
        <title>A tissue-specific atlas of mouse protein phosphorylation and expression.</title>
        <authorList>
            <person name="Huttlin E.L."/>
            <person name="Jedrychowski M.P."/>
            <person name="Elias J.E."/>
            <person name="Goswami T."/>
            <person name="Rad R."/>
            <person name="Beausoleil S.A."/>
            <person name="Villen J."/>
            <person name="Haas W."/>
            <person name="Sowa M.E."/>
            <person name="Gygi S.P."/>
        </authorList>
    </citation>
    <scope>PHOSPHORYLATION [LARGE SCALE ANALYSIS] AT SER-903</scope>
    <scope>IDENTIFICATION BY MASS SPECTROMETRY [LARGE SCALE ANALYSIS]</scope>
    <source>
        <tissue>Lung</tissue>
    </source>
</reference>
<reference key="6">
    <citation type="journal article" date="2011" name="Development">
        <title>Kif7 promotes hedgehog signaling in growth plate chondrocytes by restricting the inhibitory function of Sufu.</title>
        <authorList>
            <person name="Hsu S.H."/>
            <person name="Zhang X."/>
            <person name="Yu C."/>
            <person name="Li Z.J."/>
            <person name="Wunder J.S."/>
            <person name="Hui C.C."/>
            <person name="Alman B.A."/>
        </authorList>
    </citation>
    <scope>FUNCTION IN REGULATION OF IHH SIGNALING AND CHONDROCYTE DEVELOPMENT</scope>
</reference>
<reference key="7">
    <citation type="journal article" date="2011" name="J. Clin. Invest.">
        <title>Mutations in KIF7 link Joubert syndrome with Sonic Hedgehog signaling and microtubule dynamics.</title>
        <authorList>
            <person name="Dafinger C."/>
            <person name="Liebau M.C."/>
            <person name="Elsayed S.M."/>
            <person name="Hellenbroich Y."/>
            <person name="Boltshauser E."/>
            <person name="Korenke G.C."/>
            <person name="Fabretti F."/>
            <person name="Janecke A.R."/>
            <person name="Ebermann I."/>
            <person name="Nurnberg G."/>
            <person name="Nurnberg P."/>
            <person name="Zentgraf H."/>
            <person name="Koerber F."/>
            <person name="Addicks K."/>
            <person name="Elsobky E."/>
            <person name="Benzing T."/>
            <person name="Schermer B."/>
            <person name="Bolz H.J."/>
        </authorList>
    </citation>
    <scope>TISSUE SPECIFICITY</scope>
</reference>
<reference key="8">
    <citation type="journal article" date="2012" name="Development">
        <title>Kif7 regulates Gli2 through Sufu-dependent and -independent functions during skin development and tumorigenesis.</title>
        <authorList>
            <person name="Li Z.J."/>
            <person name="Nieuwenhuis E."/>
            <person name="Nien W."/>
            <person name="Zhang X."/>
            <person name="Zhang J."/>
            <person name="Puviindran V."/>
            <person name="Wainwright B.J."/>
            <person name="Kim P.C."/>
            <person name="Hui C.C."/>
        </authorList>
    </citation>
    <scope>FUNCTION IN REGULATION OF EPIDERMAL DIFFERENTIATION</scope>
    <scope>INTERACTION WITH GLI2 AND SUFU</scope>
</reference>
<reference key="9">
    <citation type="journal article" date="2014" name="Nat. Cell Biol.">
        <title>The kinesin-4 protein Kif7 regulates mammalian Hedgehog signalling by organizing the cilium tip compartment.</title>
        <authorList>
            <person name="He M."/>
            <person name="Subramanian R."/>
            <person name="Bangs F."/>
            <person name="Omelchenko T."/>
            <person name="Liem K.F. Jr."/>
            <person name="Kapoor T.M."/>
            <person name="Anderson K.V."/>
        </authorList>
    </citation>
    <scope>FUNCTION</scope>
    <scope>SUBCELLULAR LOCATION</scope>
    <scope>SUBUNIT</scope>
    <scope>INTERACTION WITH MICROTUBULES</scope>
</reference>
<reference key="10">
    <citation type="journal article" date="2015" name="Genes Dev.">
        <title>Bifurcating action of Smoothened in Hedgehog signaling is mediated by Dlg5.</title>
        <authorList>
            <person name="Chong Y.C."/>
            <person name="Mann R.K."/>
            <person name="Zhao C."/>
            <person name="Kato M."/>
            <person name="Beachy P.A."/>
        </authorList>
    </citation>
    <scope>INTERACTION WITH SMO AND DLG5</scope>
    <scope>SUBCELLULAR LOCATION</scope>
</reference>
<reference key="11">
    <citation type="journal article" date="2016" name="PLoS Genet.">
        <title>Ubr3, a Novel Modulator of Hh Signaling Affects the Degradation of Costal-2 and Kif7 through Poly-ubiquitination.</title>
        <authorList>
            <person name="Li T."/>
            <person name="Fan J."/>
            <person name="Blanco-Sanchez B."/>
            <person name="Giagtzoglou N."/>
            <person name="Lin G."/>
            <person name="Yamamoto S."/>
            <person name="Jaiswal M."/>
            <person name="Chen K."/>
            <person name="Zhang J."/>
            <person name="Wei W."/>
            <person name="Lewis M.T."/>
            <person name="Groves A.K."/>
            <person name="Westerfield M."/>
            <person name="Jia J."/>
            <person name="Bellen H.J."/>
        </authorList>
    </citation>
    <scope>UBIQUITINATION</scope>
</reference>
<evidence type="ECO:0000250" key="1">
    <source>
        <dbReference type="UniProtKB" id="Q2M1P5"/>
    </source>
</evidence>
<evidence type="ECO:0000255" key="2"/>
<evidence type="ECO:0000255" key="3">
    <source>
        <dbReference type="PROSITE-ProRule" id="PRU00283"/>
    </source>
</evidence>
<evidence type="ECO:0000256" key="4">
    <source>
        <dbReference type="SAM" id="MobiDB-lite"/>
    </source>
</evidence>
<evidence type="ECO:0000269" key="5">
    <source>
    </source>
</evidence>
<evidence type="ECO:0000269" key="6">
    <source>
    </source>
</evidence>
<evidence type="ECO:0000269" key="7">
    <source>
    </source>
</evidence>
<evidence type="ECO:0000269" key="8">
    <source>
    </source>
</evidence>
<evidence type="ECO:0000269" key="9">
    <source>
    </source>
</evidence>
<evidence type="ECO:0000269" key="10">
    <source>
    </source>
</evidence>
<evidence type="ECO:0000269" key="11">
    <source>
    </source>
</evidence>
<evidence type="ECO:0000269" key="12">
    <source>
    </source>
</evidence>
<evidence type="ECO:0000269" key="13">
    <source>
    </source>
</evidence>
<evidence type="ECO:0000303" key="14">
    <source>
    </source>
</evidence>
<evidence type="ECO:0000305" key="15"/>
<evidence type="ECO:0007744" key="16">
    <source>
    </source>
</evidence>
<protein>
    <recommendedName>
        <fullName>Kinesin-like protein KIF7</fullName>
    </recommendedName>
</protein>
<organism>
    <name type="scientific">Mus musculus</name>
    <name type="common">Mouse</name>
    <dbReference type="NCBI Taxonomy" id="10090"/>
    <lineage>
        <taxon>Eukaryota</taxon>
        <taxon>Metazoa</taxon>
        <taxon>Chordata</taxon>
        <taxon>Craniata</taxon>
        <taxon>Vertebrata</taxon>
        <taxon>Euteleostomi</taxon>
        <taxon>Mammalia</taxon>
        <taxon>Eutheria</taxon>
        <taxon>Euarchontoglires</taxon>
        <taxon>Glires</taxon>
        <taxon>Rodentia</taxon>
        <taxon>Myomorpha</taxon>
        <taxon>Muroidea</taxon>
        <taxon>Muridae</taxon>
        <taxon>Murinae</taxon>
        <taxon>Mus</taxon>
        <taxon>Mus</taxon>
    </lineage>
</organism>
<proteinExistence type="evidence at protein level"/>
<gene>
    <name type="primary">Kif7</name>
</gene>
<dbReference type="EMBL" id="BC141045">
    <property type="protein sequence ID" value="AAI41046.1"/>
    <property type="molecule type" value="mRNA"/>
</dbReference>
<dbReference type="EMBL" id="BC145222">
    <property type="protein sequence ID" value="AAI45223.1"/>
    <property type="molecule type" value="mRNA"/>
</dbReference>
<dbReference type="CCDS" id="CCDS52278.1">
    <molecule id="B7ZNG0-2"/>
</dbReference>
<dbReference type="CCDS" id="CCDS80739.1">
    <molecule id="B7ZNG0-1"/>
</dbReference>
<dbReference type="SMR" id="B7ZNG0"/>
<dbReference type="CORUM" id="B7ZNG0"/>
<dbReference type="DIP" id="DIP-61761N"/>
<dbReference type="FunCoup" id="B7ZNG0">
    <property type="interactions" value="108"/>
</dbReference>
<dbReference type="IntAct" id="B7ZNG0">
    <property type="interactions" value="4"/>
</dbReference>
<dbReference type="STRING" id="10090.ENSMUSP00000139359"/>
<dbReference type="GlyGen" id="B7ZNG0">
    <property type="glycosylation" value="1 site, 1 O-linked glycan (1 site)"/>
</dbReference>
<dbReference type="iPTMnet" id="B7ZNG0"/>
<dbReference type="PhosphoSitePlus" id="B7ZNG0"/>
<dbReference type="jPOST" id="B7ZNG0"/>
<dbReference type="PaxDb" id="10090-ENSMUSP00000139359"/>
<dbReference type="ProteomicsDB" id="269305">
    <molecule id="B7ZNG0-1"/>
</dbReference>
<dbReference type="ProteomicsDB" id="269306">
    <molecule id="B7ZNG0-2"/>
</dbReference>
<dbReference type="Pumba" id="B7ZNG0"/>
<dbReference type="AGR" id="MGI:1098239"/>
<dbReference type="MGI" id="MGI:1098239">
    <property type="gene designation" value="Kif7"/>
</dbReference>
<dbReference type="eggNOG" id="KOG0244">
    <property type="taxonomic scope" value="Eukaryota"/>
</dbReference>
<dbReference type="InParanoid" id="B7ZNG0"/>
<dbReference type="Reactome" id="R-MMU-5610787">
    <property type="pathway name" value="Hedgehog 'off' state"/>
</dbReference>
<dbReference type="Reactome" id="R-MMU-5632684">
    <property type="pathway name" value="Hedgehog 'on' state"/>
</dbReference>
<dbReference type="ChiTaRS" id="Kif7">
    <property type="organism name" value="mouse"/>
</dbReference>
<dbReference type="PRO" id="PR:B7ZNG0"/>
<dbReference type="Proteomes" id="UP000000589">
    <property type="component" value="Unplaced"/>
</dbReference>
<dbReference type="RNAct" id="B7ZNG0">
    <property type="molecule type" value="protein"/>
</dbReference>
<dbReference type="GO" id="GO:0036064">
    <property type="term" value="C:ciliary basal body"/>
    <property type="evidence" value="ECO:0000314"/>
    <property type="project" value="UniProtKB"/>
</dbReference>
<dbReference type="GO" id="GO:0097542">
    <property type="term" value="C:ciliary tip"/>
    <property type="evidence" value="ECO:0000314"/>
    <property type="project" value="MGI"/>
</dbReference>
<dbReference type="GO" id="GO:0005929">
    <property type="term" value="C:cilium"/>
    <property type="evidence" value="ECO:0000314"/>
    <property type="project" value="UniProtKB"/>
</dbReference>
<dbReference type="GO" id="GO:0005737">
    <property type="term" value="C:cytoplasm"/>
    <property type="evidence" value="ECO:0007669"/>
    <property type="project" value="UniProtKB-KW"/>
</dbReference>
<dbReference type="GO" id="GO:0005524">
    <property type="term" value="F:ATP binding"/>
    <property type="evidence" value="ECO:0007669"/>
    <property type="project" value="UniProtKB-KW"/>
</dbReference>
<dbReference type="GO" id="GO:0042802">
    <property type="term" value="F:identical protein binding"/>
    <property type="evidence" value="ECO:0000353"/>
    <property type="project" value="IntAct"/>
</dbReference>
<dbReference type="GO" id="GO:0008017">
    <property type="term" value="F:microtubule binding"/>
    <property type="evidence" value="ECO:0007669"/>
    <property type="project" value="InterPro"/>
</dbReference>
<dbReference type="GO" id="GO:0003777">
    <property type="term" value="F:microtubule motor activity"/>
    <property type="evidence" value="ECO:0007669"/>
    <property type="project" value="InterPro"/>
</dbReference>
<dbReference type="GO" id="GO:0035904">
    <property type="term" value="P:aorta development"/>
    <property type="evidence" value="ECO:0000315"/>
    <property type="project" value="MGI"/>
</dbReference>
<dbReference type="GO" id="GO:0003279">
    <property type="term" value="P:cardiac septum development"/>
    <property type="evidence" value="ECO:0000315"/>
    <property type="project" value="MGI"/>
</dbReference>
<dbReference type="GO" id="GO:0060976">
    <property type="term" value="P:coronary vasculature development"/>
    <property type="evidence" value="ECO:0000315"/>
    <property type="project" value="MGI"/>
</dbReference>
<dbReference type="GO" id="GO:0007018">
    <property type="term" value="P:microtubule-based movement"/>
    <property type="evidence" value="ECO:0007669"/>
    <property type="project" value="InterPro"/>
</dbReference>
<dbReference type="GO" id="GO:0045879">
    <property type="term" value="P:negative regulation of smoothened signaling pathway"/>
    <property type="evidence" value="ECO:0000315"/>
    <property type="project" value="UniProtKB"/>
</dbReference>
<dbReference type="GO" id="GO:0045880">
    <property type="term" value="P:positive regulation of smoothened signaling pathway"/>
    <property type="evidence" value="ECO:0000315"/>
    <property type="project" value="UniProtKB"/>
</dbReference>
<dbReference type="CDD" id="cd01372">
    <property type="entry name" value="KISc_KIF4"/>
    <property type="match status" value="1"/>
</dbReference>
<dbReference type="FunFam" id="3.40.850.10:FF:000025">
    <property type="entry name" value="kinesin-like protein KIF27 isoform X1"/>
    <property type="match status" value="1"/>
</dbReference>
<dbReference type="Gene3D" id="3.40.850.10">
    <property type="entry name" value="Kinesin motor domain"/>
    <property type="match status" value="1"/>
</dbReference>
<dbReference type="InterPro" id="IPR027640">
    <property type="entry name" value="Kinesin-like_fam"/>
</dbReference>
<dbReference type="InterPro" id="IPR019821">
    <property type="entry name" value="Kinesin_motor_CS"/>
</dbReference>
<dbReference type="InterPro" id="IPR001752">
    <property type="entry name" value="Kinesin_motor_dom"/>
</dbReference>
<dbReference type="InterPro" id="IPR036961">
    <property type="entry name" value="Kinesin_motor_dom_sf"/>
</dbReference>
<dbReference type="InterPro" id="IPR027417">
    <property type="entry name" value="P-loop_NTPase"/>
</dbReference>
<dbReference type="PANTHER" id="PTHR47969">
    <property type="entry name" value="CHROMOSOME-ASSOCIATED KINESIN KIF4A-RELATED"/>
    <property type="match status" value="1"/>
</dbReference>
<dbReference type="PANTHER" id="PTHR47969:SF8">
    <property type="entry name" value="KINESIN FAMILY MEMBER 7"/>
    <property type="match status" value="1"/>
</dbReference>
<dbReference type="Pfam" id="PF00225">
    <property type="entry name" value="Kinesin"/>
    <property type="match status" value="1"/>
</dbReference>
<dbReference type="PRINTS" id="PR00380">
    <property type="entry name" value="KINESINHEAVY"/>
</dbReference>
<dbReference type="SMART" id="SM00129">
    <property type="entry name" value="KISc"/>
    <property type="match status" value="1"/>
</dbReference>
<dbReference type="SUPFAM" id="SSF52540">
    <property type="entry name" value="P-loop containing nucleoside triphosphate hydrolases"/>
    <property type="match status" value="1"/>
</dbReference>
<dbReference type="PROSITE" id="PS00411">
    <property type="entry name" value="KINESIN_MOTOR_1"/>
    <property type="match status" value="1"/>
</dbReference>
<dbReference type="PROSITE" id="PS50067">
    <property type="entry name" value="KINESIN_MOTOR_2"/>
    <property type="match status" value="1"/>
</dbReference>
<name>KIF7_MOUSE</name>
<keyword id="KW-0025">Alternative splicing</keyword>
<keyword id="KW-0067">ATP-binding</keyword>
<keyword id="KW-0966">Cell projection</keyword>
<keyword id="KW-0969">Cilium</keyword>
<keyword id="KW-0175">Coiled coil</keyword>
<keyword id="KW-0963">Cytoplasm</keyword>
<keyword id="KW-0206">Cytoskeleton</keyword>
<keyword id="KW-0505">Motor protein</keyword>
<keyword id="KW-0547">Nucleotide-binding</keyword>
<keyword id="KW-0597">Phosphoprotein</keyword>
<keyword id="KW-1185">Reference proteome</keyword>
<keyword id="KW-0678">Repressor</keyword>
<keyword id="KW-0832">Ubl conjugation</keyword>
<sequence length="1348" mass="151624">MGLEAQRLPGAEEAPVRVALRVRPLLPKELLHGHQSCLRVEPERGRITLGRDRHFGFHVVLGEDTGQEAVYQACVQPLLEAFFEGFNATVFAYGQTGSGKTYTMGEASVASLHEDEQGIIPRAMAEAFKLIDENDLLDCLVHVSYLELYKEEFRDLLEVGTASRDIQLREDDRGNVVLCGVKEVDVEGLDEVLSLLEMGNAARHTGATHFNRLSSRSHTVFTVTLEQRGRTPSRLPRPAAGHLLVSKFHFVDLAGSERVLKTGSTGERLKESIQINSTLLALGNVISALGDPQRRGSHIPYRDSKITRILKDSLGGNAKTVMIACVSPSSSDFDETLNTLNYASRAQNIRNRATVNWHPEAERVPEEQAAGARGPPRHRSETRIIHRGRRVPCPAVGSAAVAAGLGAECARCRARTSAAYSLLRELQAEPGLPGAAARKVRDWLCAVEGERSTLSSASGPDSGIESAPAEDQAAQGTSGRKGDEGTQQLLTLQSQVARLEEENRDFLAALEDAMEQYKLQSDRLREQQEEMVELRLRLELAQPGWGAPGLLQGLPPGSFVPRPHTAPLGGAHTHMLGMMPSTCLPGEEVSSEQQVVSGKEVKAEVLAQADKLRSASSTTSEEEGEEEEEEEEEEEEPPRRTLYLRRNGISNWSQRAGLSPGSPPDRKGPEVCPEEPAAAIPAPQAVGSGKVPVQTRQAPAAMASEWRLAQAQQKIRELAINIRMKEELIGELVRTGKAAQALNRQHSQRIRELEQEAERVRAELCEGQRQLRELEGREPQDASERSRLQEFRKRVAAAQSQVQVLKEKKQATERLVSLSAQSETRLQELERNVQLMRRQQGQLQRRLREETEQKRRLETEMNKRQHRVKELELKHEQQQKILKIKTEEIAAFQRKRRSGSNGSVVSLEQQQKIEEQKKWLDQEMEKVLQQRRALEELGEELRKREVILAKKEALMQEKTGLESKRLRSSQALNEDIVRVSSRLEHLEKELSEKSGQLRQGSAQNQQQIRGEIDTLRQEKDSLLKQRLEIDSKLRQGSLLSPEEERTLFQLDEAIEALDAAIEYKNEAITCRQRVLRASASLLSQCEMNLMAKLSYLSSSETRALLCKYFDKVVTLREEQHQQQIAFSELEMQLEEQQRLVYWLEVALERQRLEMDRQLTLQQKEHEQNVQLLLQQGRDHLGEGLADSKRQYEARIHALEKELGRHMWINQELKQKLSAGSTAGQSQGCERRSLCLENRQCLGNEDGLHPAAPEPLWQSSLLEGVSRVWDESRDLVHAPLPLTWKRSSLCSEQGSSEESRVRETTEPPVGRVLPMGEVGLSWNFGPLPKPRWEPRRTSPGMIDVRKNPL</sequence>
<feature type="chain" id="PRO_0000405978" description="Kinesin-like protein KIF7">
    <location>
        <begin position="1"/>
        <end position="1348"/>
    </location>
</feature>
<feature type="domain" description="Kinesin motor" evidence="3">
    <location>
        <begin position="15"/>
        <end position="349"/>
    </location>
</feature>
<feature type="region of interest" description="Interaction with SMO" evidence="12">
    <location>
        <begin position="358"/>
        <end position="1211"/>
    </location>
</feature>
<feature type="region of interest" description="Interaction with DLG5" evidence="12">
    <location>
        <begin position="358"/>
        <end position="479"/>
    </location>
</feature>
<feature type="region of interest" description="Disordered" evidence="4">
    <location>
        <begin position="451"/>
        <end position="486"/>
    </location>
</feature>
<feature type="region of interest" description="Disordered" evidence="4">
    <location>
        <begin position="607"/>
        <end position="674"/>
    </location>
</feature>
<feature type="region of interest" description="Disordered" evidence="4">
    <location>
        <begin position="1288"/>
        <end position="1314"/>
    </location>
</feature>
<feature type="region of interest" description="Disordered" evidence="4">
    <location>
        <begin position="1328"/>
        <end position="1348"/>
    </location>
</feature>
<feature type="coiled-coil region" evidence="2">
    <location>
        <begin position="480"/>
        <end position="542"/>
    </location>
</feature>
<feature type="coiled-coil region" evidence="2">
    <location>
        <begin position="698"/>
        <end position="1057"/>
    </location>
</feature>
<feature type="coiled-coil region" evidence="2">
    <location>
        <begin position="1109"/>
        <end position="1211"/>
    </location>
</feature>
<feature type="compositionally biased region" description="Acidic residues" evidence="4">
    <location>
        <begin position="620"/>
        <end position="636"/>
    </location>
</feature>
<feature type="binding site" evidence="3">
    <location>
        <begin position="94"/>
        <end position="101"/>
    </location>
    <ligand>
        <name>ATP</name>
        <dbReference type="ChEBI" id="CHEBI:30616"/>
    </ligand>
</feature>
<feature type="modified residue" description="Phosphoserine" evidence="16">
    <location>
        <position position="903"/>
    </location>
</feature>
<feature type="splice variant" id="VSP_040736" description="In isoform 2." evidence="14">
    <location>
        <position position="912"/>
    </location>
</feature>
<feature type="mutagenesis site" description="In maki; expanded motor neuron domain in the 10.5 dpc neural tube." evidence="7">
    <original>L</original>
    <variation>P</variation>
    <location>
        <position position="130"/>
    </location>
</feature>
<feature type="sequence conflict" description="In Ref. 1; AAI41046." evidence="15" ref="1">
    <original>Q</original>
    <variation>R</variation>
    <location>
        <position position="1226"/>
    </location>
</feature>